<reference key="1">
    <citation type="journal article" date="2001" name="Nucleic Acids Res.">
        <title>The complete genome sequence of the murine respiratory pathogen Mycoplasma pulmonis.</title>
        <authorList>
            <person name="Chambaud I."/>
            <person name="Heilig R."/>
            <person name="Ferris S."/>
            <person name="Barbe V."/>
            <person name="Samson D."/>
            <person name="Galisson F."/>
            <person name="Moszer I."/>
            <person name="Dybvig K."/>
            <person name="Wroblewski H."/>
            <person name="Viari A."/>
            <person name="Rocha E.P.C."/>
            <person name="Blanchard A."/>
        </authorList>
    </citation>
    <scope>NUCLEOTIDE SEQUENCE [LARGE SCALE GENOMIC DNA]</scope>
    <source>
        <strain>UAB CTIP</strain>
    </source>
</reference>
<keyword id="KW-0963">Cytoplasm</keyword>
<keyword id="KW-0238">DNA-binding</keyword>
<keyword id="KW-1185">Reference proteome</keyword>
<keyword id="KW-0677">Repeat</keyword>
<keyword id="KW-0804">Transcription</keyword>
<keyword id="KW-0805">Transcription regulation</keyword>
<sequence>MALYGNFERSLDPKNRLSLPAKFKTELGSNFYLSVLLDGVVEIRNSEEFENEAHKFKTMNVLDKNARDFARLFFQRTVEVEADKQGRFVLPKHILEKASIQKDVVLVGMGDKVELWSKAKYDSFQDSIDDEKIENIAFKLKESGVEF</sequence>
<protein>
    <recommendedName>
        <fullName>Transcriptional regulator MraZ</fullName>
    </recommendedName>
</protein>
<comment type="subunit">
    <text evidence="1">Forms oligomers.</text>
</comment>
<comment type="subcellular location">
    <subcellularLocation>
        <location evidence="1">Cytoplasm</location>
        <location evidence="1">Nucleoid</location>
    </subcellularLocation>
</comment>
<comment type="similarity">
    <text evidence="1">Belongs to the MraZ family.</text>
</comment>
<comment type="sequence caution" evidence="3">
    <conflict type="erroneous initiation">
        <sequence resource="EMBL-CDS" id="CAC13667"/>
    </conflict>
</comment>
<feature type="chain" id="PRO_0000108509" description="Transcriptional regulator MraZ">
    <location>
        <begin position="1"/>
        <end position="147"/>
    </location>
</feature>
<feature type="domain" description="SpoVT-AbrB 1" evidence="2">
    <location>
        <begin position="6"/>
        <end position="48"/>
    </location>
</feature>
<feature type="domain" description="SpoVT-AbrB 2" evidence="2">
    <location>
        <begin position="77"/>
        <end position="120"/>
    </location>
</feature>
<accession>Q98Q74</accession>
<evidence type="ECO:0000255" key="1">
    <source>
        <dbReference type="HAMAP-Rule" id="MF_01008"/>
    </source>
</evidence>
<evidence type="ECO:0000255" key="2">
    <source>
        <dbReference type="PROSITE-ProRule" id="PRU01076"/>
    </source>
</evidence>
<evidence type="ECO:0000305" key="3"/>
<dbReference type="EMBL" id="AL445564">
    <property type="protein sequence ID" value="CAC13667.1"/>
    <property type="status" value="ALT_INIT"/>
    <property type="molecule type" value="Genomic_DNA"/>
</dbReference>
<dbReference type="PIR" id="F90573">
    <property type="entry name" value="F90573"/>
</dbReference>
<dbReference type="RefSeq" id="WP_010925295.1">
    <property type="nucleotide sequence ID" value="NC_002771.1"/>
</dbReference>
<dbReference type="SMR" id="Q98Q74"/>
<dbReference type="STRING" id="272635.gene:17577095"/>
<dbReference type="KEGG" id="mpu:MYPU_4940"/>
<dbReference type="eggNOG" id="COG2001">
    <property type="taxonomic scope" value="Bacteria"/>
</dbReference>
<dbReference type="HOGENOM" id="CLU_107907_0_2_14"/>
<dbReference type="Proteomes" id="UP000000528">
    <property type="component" value="Chromosome"/>
</dbReference>
<dbReference type="GO" id="GO:0005737">
    <property type="term" value="C:cytoplasm"/>
    <property type="evidence" value="ECO:0007669"/>
    <property type="project" value="UniProtKB-UniRule"/>
</dbReference>
<dbReference type="GO" id="GO:0009295">
    <property type="term" value="C:nucleoid"/>
    <property type="evidence" value="ECO:0007669"/>
    <property type="project" value="UniProtKB-SubCell"/>
</dbReference>
<dbReference type="GO" id="GO:0003700">
    <property type="term" value="F:DNA-binding transcription factor activity"/>
    <property type="evidence" value="ECO:0007669"/>
    <property type="project" value="UniProtKB-UniRule"/>
</dbReference>
<dbReference type="GO" id="GO:0000976">
    <property type="term" value="F:transcription cis-regulatory region binding"/>
    <property type="evidence" value="ECO:0007669"/>
    <property type="project" value="TreeGrafter"/>
</dbReference>
<dbReference type="GO" id="GO:2000143">
    <property type="term" value="P:negative regulation of DNA-templated transcription initiation"/>
    <property type="evidence" value="ECO:0007669"/>
    <property type="project" value="TreeGrafter"/>
</dbReference>
<dbReference type="CDD" id="cd16321">
    <property type="entry name" value="MraZ_C"/>
    <property type="match status" value="1"/>
</dbReference>
<dbReference type="CDD" id="cd16320">
    <property type="entry name" value="MraZ_N"/>
    <property type="match status" value="1"/>
</dbReference>
<dbReference type="Gene3D" id="3.40.1550.20">
    <property type="entry name" value="Transcriptional regulator MraZ domain"/>
    <property type="match status" value="1"/>
</dbReference>
<dbReference type="HAMAP" id="MF_01008">
    <property type="entry name" value="MraZ"/>
    <property type="match status" value="1"/>
</dbReference>
<dbReference type="InterPro" id="IPR003444">
    <property type="entry name" value="MraZ"/>
</dbReference>
<dbReference type="InterPro" id="IPR035644">
    <property type="entry name" value="MraZ_C"/>
</dbReference>
<dbReference type="InterPro" id="IPR020603">
    <property type="entry name" value="MraZ_dom"/>
</dbReference>
<dbReference type="InterPro" id="IPR035642">
    <property type="entry name" value="MraZ_N"/>
</dbReference>
<dbReference type="InterPro" id="IPR038619">
    <property type="entry name" value="MraZ_sf"/>
</dbReference>
<dbReference type="InterPro" id="IPR007159">
    <property type="entry name" value="SpoVT-AbrB_dom"/>
</dbReference>
<dbReference type="InterPro" id="IPR037914">
    <property type="entry name" value="SpoVT-AbrB_sf"/>
</dbReference>
<dbReference type="NCBIfam" id="TIGR00242">
    <property type="entry name" value="division/cell wall cluster transcriptional repressor MraZ"/>
    <property type="match status" value="1"/>
</dbReference>
<dbReference type="PANTHER" id="PTHR34701">
    <property type="entry name" value="TRANSCRIPTIONAL REGULATOR MRAZ"/>
    <property type="match status" value="1"/>
</dbReference>
<dbReference type="PANTHER" id="PTHR34701:SF1">
    <property type="entry name" value="TRANSCRIPTIONAL REGULATOR MRAZ"/>
    <property type="match status" value="1"/>
</dbReference>
<dbReference type="Pfam" id="PF02381">
    <property type="entry name" value="MraZ"/>
    <property type="match status" value="2"/>
</dbReference>
<dbReference type="SUPFAM" id="SSF89447">
    <property type="entry name" value="AbrB/MazE/MraZ-like"/>
    <property type="match status" value="1"/>
</dbReference>
<dbReference type="PROSITE" id="PS51740">
    <property type="entry name" value="SPOVT_ABRB"/>
    <property type="match status" value="2"/>
</dbReference>
<proteinExistence type="inferred from homology"/>
<name>MRAZ_MYCPU</name>
<organism>
    <name type="scientific">Mycoplasmopsis pulmonis (strain UAB CTIP)</name>
    <name type="common">Mycoplasma pulmonis</name>
    <dbReference type="NCBI Taxonomy" id="272635"/>
    <lineage>
        <taxon>Bacteria</taxon>
        <taxon>Bacillati</taxon>
        <taxon>Mycoplasmatota</taxon>
        <taxon>Mycoplasmoidales</taxon>
        <taxon>Metamycoplasmataceae</taxon>
        <taxon>Mycoplasmopsis</taxon>
    </lineage>
</organism>
<gene>
    <name evidence="1" type="primary">mraZ</name>
    <name type="ordered locus">MYPU_4940</name>
</gene>